<comment type="similarity">
    <text evidence="1">Belongs to the bacterial histone-like protein family.</text>
</comment>
<proteinExistence type="inferred from homology"/>
<reference key="1">
    <citation type="journal article" date="2001" name="Mol. Biol. Evol.">
        <title>Pseudogenes, junk DNA, and the dynamics of Rickettsia genomes.</title>
        <authorList>
            <person name="Andersson J.O."/>
            <person name="Andersson S.G.E."/>
        </authorList>
    </citation>
    <scope>NUCLEOTIDE SEQUENCE [GENOMIC DNA]</scope>
    <source>
        <strain>84-21C</strain>
    </source>
</reference>
<name>HLP_RICRI</name>
<dbReference type="EMBL" id="AJ293329">
    <property type="protein sequence ID" value="CAC33712.1"/>
    <property type="molecule type" value="Genomic_DNA"/>
</dbReference>
<dbReference type="RefSeq" id="WP_012151223.1">
    <property type="nucleotide sequence ID" value="NZ_CP151153.1"/>
</dbReference>
<dbReference type="SMR" id="Q9AKF3"/>
<dbReference type="GeneID" id="79937736"/>
<dbReference type="OMA" id="AIVHTVF"/>
<dbReference type="GO" id="GO:0005829">
    <property type="term" value="C:cytosol"/>
    <property type="evidence" value="ECO:0007669"/>
    <property type="project" value="TreeGrafter"/>
</dbReference>
<dbReference type="GO" id="GO:0003677">
    <property type="term" value="F:DNA binding"/>
    <property type="evidence" value="ECO:0007669"/>
    <property type="project" value="UniProtKB-KW"/>
</dbReference>
<dbReference type="GO" id="GO:0030527">
    <property type="term" value="F:structural constituent of chromatin"/>
    <property type="evidence" value="ECO:0007669"/>
    <property type="project" value="InterPro"/>
</dbReference>
<dbReference type="Gene3D" id="4.10.520.10">
    <property type="entry name" value="IHF-like DNA-binding proteins"/>
    <property type="match status" value="1"/>
</dbReference>
<dbReference type="InterPro" id="IPR000119">
    <property type="entry name" value="Hist_DNA-bd"/>
</dbReference>
<dbReference type="InterPro" id="IPR010992">
    <property type="entry name" value="IHF-like_DNA-bd_dom_sf"/>
</dbReference>
<dbReference type="PANTHER" id="PTHR33175">
    <property type="entry name" value="DNA-BINDING PROTEIN HU"/>
    <property type="match status" value="1"/>
</dbReference>
<dbReference type="PANTHER" id="PTHR33175:SF2">
    <property type="entry name" value="INTEGRATION HOST FACTOR SUBUNIT ALPHA"/>
    <property type="match status" value="1"/>
</dbReference>
<dbReference type="Pfam" id="PF00216">
    <property type="entry name" value="Bac_DNA_binding"/>
    <property type="match status" value="1"/>
</dbReference>
<dbReference type="SMART" id="SM00411">
    <property type="entry name" value="BHL"/>
    <property type="match status" value="1"/>
</dbReference>
<dbReference type="SUPFAM" id="SSF47729">
    <property type="entry name" value="IHF-like DNA-binding proteins"/>
    <property type="match status" value="1"/>
</dbReference>
<evidence type="ECO:0000305" key="1"/>
<organism>
    <name type="scientific">Rickettsia rickettsii</name>
    <dbReference type="NCBI Taxonomy" id="783"/>
    <lineage>
        <taxon>Bacteria</taxon>
        <taxon>Pseudomonadati</taxon>
        <taxon>Pseudomonadota</taxon>
        <taxon>Alphaproteobacteria</taxon>
        <taxon>Rickettsiales</taxon>
        <taxon>Rickettsiaceae</taxon>
        <taxon>Rickettsieae</taxon>
        <taxon>Rickettsia</taxon>
        <taxon>spotted fever group</taxon>
    </lineage>
</organism>
<keyword id="KW-0238">DNA-binding</keyword>
<protein>
    <recommendedName>
        <fullName>Histone-like DNA-binding protein</fullName>
    </recommendedName>
</protein>
<feature type="chain" id="PRO_0000280389" description="Histone-like DNA-binding protein">
    <location>
        <begin position="1"/>
        <end position="95"/>
    </location>
</feature>
<sequence>MTITKAKIAAMLSSKLGFSNHLCEEIVHTVFSNILEIAKAQKLTLKNFGSFEVKQKNPRPGINFHTKALVIIESKKHLRFVPSSKLKALINESTR</sequence>
<accession>Q9AKF3</accession>